<gene>
    <name evidence="1" type="primary">rplT</name>
    <name type="ordered locus">Anae109_1882</name>
</gene>
<evidence type="ECO:0000255" key="1">
    <source>
        <dbReference type="HAMAP-Rule" id="MF_00382"/>
    </source>
</evidence>
<evidence type="ECO:0000305" key="2"/>
<dbReference type="EMBL" id="CP000769">
    <property type="protein sequence ID" value="ABS26085.1"/>
    <property type="molecule type" value="Genomic_DNA"/>
</dbReference>
<dbReference type="RefSeq" id="WP_012096663.1">
    <property type="nucleotide sequence ID" value="NC_009675.1"/>
</dbReference>
<dbReference type="SMR" id="A7HBI9"/>
<dbReference type="STRING" id="404589.Anae109_1882"/>
<dbReference type="KEGG" id="afw:Anae109_1882"/>
<dbReference type="eggNOG" id="COG0292">
    <property type="taxonomic scope" value="Bacteria"/>
</dbReference>
<dbReference type="HOGENOM" id="CLU_123265_0_1_7"/>
<dbReference type="OrthoDB" id="9808966at2"/>
<dbReference type="Proteomes" id="UP000006382">
    <property type="component" value="Chromosome"/>
</dbReference>
<dbReference type="GO" id="GO:1990904">
    <property type="term" value="C:ribonucleoprotein complex"/>
    <property type="evidence" value="ECO:0007669"/>
    <property type="project" value="UniProtKB-KW"/>
</dbReference>
<dbReference type="GO" id="GO:0005840">
    <property type="term" value="C:ribosome"/>
    <property type="evidence" value="ECO:0007669"/>
    <property type="project" value="UniProtKB-KW"/>
</dbReference>
<dbReference type="GO" id="GO:0019843">
    <property type="term" value="F:rRNA binding"/>
    <property type="evidence" value="ECO:0007669"/>
    <property type="project" value="UniProtKB-UniRule"/>
</dbReference>
<dbReference type="GO" id="GO:0003735">
    <property type="term" value="F:structural constituent of ribosome"/>
    <property type="evidence" value="ECO:0007669"/>
    <property type="project" value="InterPro"/>
</dbReference>
<dbReference type="GO" id="GO:0000027">
    <property type="term" value="P:ribosomal large subunit assembly"/>
    <property type="evidence" value="ECO:0007669"/>
    <property type="project" value="UniProtKB-UniRule"/>
</dbReference>
<dbReference type="GO" id="GO:0006412">
    <property type="term" value="P:translation"/>
    <property type="evidence" value="ECO:0007669"/>
    <property type="project" value="InterPro"/>
</dbReference>
<dbReference type="CDD" id="cd07026">
    <property type="entry name" value="Ribosomal_L20"/>
    <property type="match status" value="1"/>
</dbReference>
<dbReference type="FunFam" id="1.10.1900.20:FF:000001">
    <property type="entry name" value="50S ribosomal protein L20"/>
    <property type="match status" value="1"/>
</dbReference>
<dbReference type="Gene3D" id="6.10.160.10">
    <property type="match status" value="1"/>
</dbReference>
<dbReference type="Gene3D" id="1.10.1900.20">
    <property type="entry name" value="Ribosomal protein L20"/>
    <property type="match status" value="1"/>
</dbReference>
<dbReference type="HAMAP" id="MF_00382">
    <property type="entry name" value="Ribosomal_bL20"/>
    <property type="match status" value="1"/>
</dbReference>
<dbReference type="InterPro" id="IPR005813">
    <property type="entry name" value="Ribosomal_bL20"/>
</dbReference>
<dbReference type="InterPro" id="IPR035566">
    <property type="entry name" value="Ribosomal_protein_bL20_C"/>
</dbReference>
<dbReference type="NCBIfam" id="TIGR01032">
    <property type="entry name" value="rplT_bact"/>
    <property type="match status" value="1"/>
</dbReference>
<dbReference type="PANTHER" id="PTHR10986">
    <property type="entry name" value="39S RIBOSOMAL PROTEIN L20"/>
    <property type="match status" value="1"/>
</dbReference>
<dbReference type="Pfam" id="PF00453">
    <property type="entry name" value="Ribosomal_L20"/>
    <property type="match status" value="1"/>
</dbReference>
<dbReference type="PRINTS" id="PR00062">
    <property type="entry name" value="RIBOSOMALL20"/>
</dbReference>
<dbReference type="SUPFAM" id="SSF74731">
    <property type="entry name" value="Ribosomal protein L20"/>
    <property type="match status" value="1"/>
</dbReference>
<name>RL20_ANADF</name>
<sequence length="114" mass="13052">MRVKKGYKARRRRNRVLKLAKGFRGRRKNCYRRANQAVERALDYATRDRRQKRRDFRALWIVRINAAARQNGTTYSRLLAGLKKAGVAIDRKILADLALALPGDFAAVVKAAKA</sequence>
<organism>
    <name type="scientific">Anaeromyxobacter sp. (strain Fw109-5)</name>
    <dbReference type="NCBI Taxonomy" id="404589"/>
    <lineage>
        <taxon>Bacteria</taxon>
        <taxon>Pseudomonadati</taxon>
        <taxon>Myxococcota</taxon>
        <taxon>Myxococcia</taxon>
        <taxon>Myxococcales</taxon>
        <taxon>Cystobacterineae</taxon>
        <taxon>Anaeromyxobacteraceae</taxon>
        <taxon>Anaeromyxobacter</taxon>
    </lineage>
</organism>
<protein>
    <recommendedName>
        <fullName evidence="1">Large ribosomal subunit protein bL20</fullName>
    </recommendedName>
    <alternativeName>
        <fullName evidence="2">50S ribosomal protein L20</fullName>
    </alternativeName>
</protein>
<proteinExistence type="inferred from homology"/>
<accession>A7HBI9</accession>
<feature type="chain" id="PRO_1000048924" description="Large ribosomal subunit protein bL20">
    <location>
        <begin position="1"/>
        <end position="114"/>
    </location>
</feature>
<reference key="1">
    <citation type="journal article" date="2015" name="Genome Announc.">
        <title>Complete genome sequence of Anaeromyxobacter sp. Fw109-5, an anaerobic, metal-reducing bacterium isolated from a contaminated subsurface environment.</title>
        <authorList>
            <person name="Hwang C."/>
            <person name="Copeland A."/>
            <person name="Lucas S."/>
            <person name="Lapidus A."/>
            <person name="Barry K."/>
            <person name="Glavina Del Rio T."/>
            <person name="Dalin E."/>
            <person name="Tice H."/>
            <person name="Pitluck S."/>
            <person name="Sims D."/>
            <person name="Brettin T."/>
            <person name="Bruce D.C."/>
            <person name="Detter J.C."/>
            <person name="Han C.S."/>
            <person name="Schmutz J."/>
            <person name="Larimer F.W."/>
            <person name="Land M.L."/>
            <person name="Hauser L.J."/>
            <person name="Kyrpides N."/>
            <person name="Lykidis A."/>
            <person name="Richardson P."/>
            <person name="Belieav A."/>
            <person name="Sanford R.A."/>
            <person name="Loeffler F.E."/>
            <person name="Fields M.W."/>
        </authorList>
    </citation>
    <scope>NUCLEOTIDE SEQUENCE [LARGE SCALE GENOMIC DNA]</scope>
    <source>
        <strain>Fw109-5</strain>
    </source>
</reference>
<comment type="function">
    <text evidence="1">Binds directly to 23S ribosomal RNA and is necessary for the in vitro assembly process of the 50S ribosomal subunit. It is not involved in the protein synthesizing functions of that subunit.</text>
</comment>
<comment type="similarity">
    <text evidence="1">Belongs to the bacterial ribosomal protein bL20 family.</text>
</comment>
<keyword id="KW-1185">Reference proteome</keyword>
<keyword id="KW-0687">Ribonucleoprotein</keyword>
<keyword id="KW-0689">Ribosomal protein</keyword>
<keyword id="KW-0694">RNA-binding</keyword>
<keyword id="KW-0699">rRNA-binding</keyword>